<proteinExistence type="inferred from homology"/>
<reference key="1">
    <citation type="journal article" date="2003" name="Nature">
        <title>The genome of a motile marine Synechococcus.</title>
        <authorList>
            <person name="Palenik B."/>
            <person name="Brahamsha B."/>
            <person name="Larimer F.W."/>
            <person name="Land M.L."/>
            <person name="Hauser L."/>
            <person name="Chain P."/>
            <person name="Lamerdin J.E."/>
            <person name="Regala W."/>
            <person name="Allen E.E."/>
            <person name="McCarren J."/>
            <person name="Paulsen I.T."/>
            <person name="Dufresne A."/>
            <person name="Partensky F."/>
            <person name="Webb E.A."/>
            <person name="Waterbury J."/>
        </authorList>
    </citation>
    <scope>NUCLEOTIDE SEQUENCE [LARGE SCALE GENOMIC DNA]</scope>
    <source>
        <strain>WH8102</strain>
    </source>
</reference>
<feature type="chain" id="PRO_0000175403" description="DNA-directed RNA polymerase subunit alpha">
    <location>
        <begin position="1"/>
        <end position="312"/>
    </location>
</feature>
<feature type="region of interest" description="Alpha N-terminal domain (alpha-NTD)" evidence="1">
    <location>
        <begin position="1"/>
        <end position="229"/>
    </location>
</feature>
<feature type="region of interest" description="Alpha C-terminal domain (alpha-CTD)" evidence="1">
    <location>
        <begin position="246"/>
        <end position="312"/>
    </location>
</feature>
<dbReference type="EC" id="2.7.7.6" evidence="1"/>
<dbReference type="EMBL" id="BX569694">
    <property type="protein sequence ID" value="CAE08605.1"/>
    <property type="molecule type" value="Genomic_DNA"/>
</dbReference>
<dbReference type="RefSeq" id="WP_011128947.1">
    <property type="nucleotide sequence ID" value="NC_005070.1"/>
</dbReference>
<dbReference type="SMR" id="Q7U4H7"/>
<dbReference type="STRING" id="84588.SYNW2090"/>
<dbReference type="KEGG" id="syw:SYNW2090"/>
<dbReference type="eggNOG" id="COG0202">
    <property type="taxonomic scope" value="Bacteria"/>
</dbReference>
<dbReference type="HOGENOM" id="CLU_053084_0_1_3"/>
<dbReference type="Proteomes" id="UP000001422">
    <property type="component" value="Chromosome"/>
</dbReference>
<dbReference type="GO" id="GO:0005737">
    <property type="term" value="C:cytoplasm"/>
    <property type="evidence" value="ECO:0007669"/>
    <property type="project" value="UniProtKB-ARBA"/>
</dbReference>
<dbReference type="GO" id="GO:0000428">
    <property type="term" value="C:DNA-directed RNA polymerase complex"/>
    <property type="evidence" value="ECO:0007669"/>
    <property type="project" value="UniProtKB-KW"/>
</dbReference>
<dbReference type="GO" id="GO:0003677">
    <property type="term" value="F:DNA binding"/>
    <property type="evidence" value="ECO:0007669"/>
    <property type="project" value="UniProtKB-UniRule"/>
</dbReference>
<dbReference type="GO" id="GO:0003899">
    <property type="term" value="F:DNA-directed RNA polymerase activity"/>
    <property type="evidence" value="ECO:0007669"/>
    <property type="project" value="UniProtKB-UniRule"/>
</dbReference>
<dbReference type="GO" id="GO:0046983">
    <property type="term" value="F:protein dimerization activity"/>
    <property type="evidence" value="ECO:0007669"/>
    <property type="project" value="InterPro"/>
</dbReference>
<dbReference type="GO" id="GO:0006351">
    <property type="term" value="P:DNA-templated transcription"/>
    <property type="evidence" value="ECO:0007669"/>
    <property type="project" value="UniProtKB-UniRule"/>
</dbReference>
<dbReference type="CDD" id="cd06928">
    <property type="entry name" value="RNAP_alpha_NTD"/>
    <property type="match status" value="1"/>
</dbReference>
<dbReference type="FunFam" id="2.170.120.12:FF:000001">
    <property type="entry name" value="DNA-directed RNA polymerase subunit alpha"/>
    <property type="match status" value="1"/>
</dbReference>
<dbReference type="Gene3D" id="1.10.150.20">
    <property type="entry name" value="5' to 3' exonuclease, C-terminal subdomain"/>
    <property type="match status" value="1"/>
</dbReference>
<dbReference type="Gene3D" id="2.170.120.12">
    <property type="entry name" value="DNA-directed RNA polymerase, insert domain"/>
    <property type="match status" value="1"/>
</dbReference>
<dbReference type="Gene3D" id="3.30.1360.10">
    <property type="entry name" value="RNA polymerase, RBP11-like subunit"/>
    <property type="match status" value="1"/>
</dbReference>
<dbReference type="HAMAP" id="MF_00059">
    <property type="entry name" value="RNApol_bact_RpoA"/>
    <property type="match status" value="1"/>
</dbReference>
<dbReference type="InterPro" id="IPR011262">
    <property type="entry name" value="DNA-dir_RNA_pol_insert"/>
</dbReference>
<dbReference type="InterPro" id="IPR011263">
    <property type="entry name" value="DNA-dir_RNA_pol_RpoA/D/Rpb3"/>
</dbReference>
<dbReference type="InterPro" id="IPR011773">
    <property type="entry name" value="DNA-dir_RpoA"/>
</dbReference>
<dbReference type="InterPro" id="IPR036603">
    <property type="entry name" value="RBP11-like"/>
</dbReference>
<dbReference type="InterPro" id="IPR011260">
    <property type="entry name" value="RNAP_asu_C"/>
</dbReference>
<dbReference type="InterPro" id="IPR036643">
    <property type="entry name" value="RNApol_insert_sf"/>
</dbReference>
<dbReference type="NCBIfam" id="NF003516">
    <property type="entry name" value="PRK05182.2-2"/>
    <property type="match status" value="1"/>
</dbReference>
<dbReference type="NCBIfam" id="NF003519">
    <property type="entry name" value="PRK05182.2-5"/>
    <property type="match status" value="1"/>
</dbReference>
<dbReference type="NCBIfam" id="TIGR02027">
    <property type="entry name" value="rpoA"/>
    <property type="match status" value="1"/>
</dbReference>
<dbReference type="Pfam" id="PF01000">
    <property type="entry name" value="RNA_pol_A_bac"/>
    <property type="match status" value="1"/>
</dbReference>
<dbReference type="Pfam" id="PF03118">
    <property type="entry name" value="RNA_pol_A_CTD"/>
    <property type="match status" value="1"/>
</dbReference>
<dbReference type="Pfam" id="PF01193">
    <property type="entry name" value="RNA_pol_L"/>
    <property type="match status" value="1"/>
</dbReference>
<dbReference type="SMART" id="SM00662">
    <property type="entry name" value="RPOLD"/>
    <property type="match status" value="1"/>
</dbReference>
<dbReference type="SUPFAM" id="SSF47789">
    <property type="entry name" value="C-terminal domain of RNA polymerase alpha subunit"/>
    <property type="match status" value="1"/>
</dbReference>
<dbReference type="SUPFAM" id="SSF56553">
    <property type="entry name" value="Insert subdomain of RNA polymerase alpha subunit"/>
    <property type="match status" value="1"/>
</dbReference>
<dbReference type="SUPFAM" id="SSF55257">
    <property type="entry name" value="RBP11-like subunits of RNA polymerase"/>
    <property type="match status" value="1"/>
</dbReference>
<comment type="function">
    <text evidence="1">DNA-dependent RNA polymerase catalyzes the transcription of DNA into RNA using the four ribonucleoside triphosphates as substrates.</text>
</comment>
<comment type="catalytic activity">
    <reaction evidence="1">
        <text>RNA(n) + a ribonucleoside 5'-triphosphate = RNA(n+1) + diphosphate</text>
        <dbReference type="Rhea" id="RHEA:21248"/>
        <dbReference type="Rhea" id="RHEA-COMP:14527"/>
        <dbReference type="Rhea" id="RHEA-COMP:17342"/>
        <dbReference type="ChEBI" id="CHEBI:33019"/>
        <dbReference type="ChEBI" id="CHEBI:61557"/>
        <dbReference type="ChEBI" id="CHEBI:140395"/>
        <dbReference type="EC" id="2.7.7.6"/>
    </reaction>
</comment>
<comment type="subunit">
    <text evidence="1">In cyanobacteria the RNAP catalytic core is composed of 2 alpha, 1 beta, 1 beta', 1 gamma and 1 omega subunit. When a sigma factor is associated with the core the holoenzyme is formed, which can initiate transcription.</text>
</comment>
<comment type="domain">
    <text evidence="1">The N-terminal domain is essential for RNAP assembly and basal transcription, whereas the C-terminal domain is involved in interaction with transcriptional regulators and with upstream promoter elements.</text>
</comment>
<comment type="similarity">
    <text evidence="1">Belongs to the RNA polymerase alpha chain family.</text>
</comment>
<accession>Q7U4H7</accession>
<gene>
    <name evidence="1" type="primary">rpoA</name>
    <name type="ordered locus">SYNW2090</name>
</gene>
<evidence type="ECO:0000255" key="1">
    <source>
        <dbReference type="HAMAP-Rule" id="MF_00059"/>
    </source>
</evidence>
<protein>
    <recommendedName>
        <fullName evidence="1">DNA-directed RNA polymerase subunit alpha</fullName>
        <shortName evidence="1">RNAP subunit alpha</shortName>
        <ecNumber evidence="1">2.7.7.6</ecNumber>
    </recommendedName>
    <alternativeName>
        <fullName evidence="1">RNA polymerase subunit alpha</fullName>
    </alternativeName>
    <alternativeName>
        <fullName evidence="1">Transcriptase subunit alpha</fullName>
    </alternativeName>
</protein>
<name>RPOA_PARMW</name>
<keyword id="KW-0240">DNA-directed RNA polymerase</keyword>
<keyword id="KW-0548">Nucleotidyltransferase</keyword>
<keyword id="KW-0804">Transcription</keyword>
<keyword id="KW-0808">Transferase</keyword>
<organism>
    <name type="scientific">Parasynechococcus marenigrum (strain WH8102)</name>
    <dbReference type="NCBI Taxonomy" id="84588"/>
    <lineage>
        <taxon>Bacteria</taxon>
        <taxon>Bacillati</taxon>
        <taxon>Cyanobacteriota</taxon>
        <taxon>Cyanophyceae</taxon>
        <taxon>Synechococcales</taxon>
        <taxon>Prochlorococcaceae</taxon>
        <taxon>Parasynechococcus</taxon>
        <taxon>Parasynechococcus marenigrum</taxon>
    </lineage>
</organism>
<sequence>MLQYQIDRIEHQVEEDRSQSGVFLIGPLERGQATTLGNALRRVLMGGLEGSAVTAIRIAGVNHEYATVPGVREDVLDILLNCKELSVNSRSPELEIGRLVVAGPAEVTAKDLQFSSQVEVVDGNRSIATVADGYSLELEVHVERGVGYRPVDRHSEDTSAIDLLQIDAVFMPVIRVNFTIDETAVAEGGSARERLRMEIVTDGSITPDDALAQSANYLIELFQPLATVTLVEEPGIEPEPSAEAQIPLEELNLSVRAYNCLKRAQVNSVSDLMGFSYEDLLEIKNFGSKSADEVIEALERIGISIPQSRTSA</sequence>